<reference key="1">
    <citation type="submission" date="2006-03" db="EMBL/GenBank/DDBJ databases">
        <title>Complete genome sequence of Gemmatimonas aurantiaca T-27 that represents a novel phylum Gemmatimonadetes.</title>
        <authorList>
            <person name="Takasaki K."/>
            <person name="Ichikawa N."/>
            <person name="Miura H."/>
            <person name="Matsushita S."/>
            <person name="Watanabe Y."/>
            <person name="Oguchi A."/>
            <person name="Ankai A."/>
            <person name="Yashiro I."/>
            <person name="Takahashi M."/>
            <person name="Terui Y."/>
            <person name="Fukui S."/>
            <person name="Yokoyama H."/>
            <person name="Tanikawa S."/>
            <person name="Hanada S."/>
            <person name="Kamagata Y."/>
            <person name="Fujita N."/>
        </authorList>
    </citation>
    <scope>NUCLEOTIDE SEQUENCE [LARGE SCALE GENOMIC DNA]</scope>
    <source>
        <strain>DSM 14586 / JCM 11422 / NBRC 100505 / T-27</strain>
    </source>
</reference>
<name>DAPF_GEMAT</name>
<organism>
    <name type="scientific">Gemmatimonas aurantiaca (strain DSM 14586 / JCM 11422 / NBRC 100505 / T-27)</name>
    <dbReference type="NCBI Taxonomy" id="379066"/>
    <lineage>
        <taxon>Bacteria</taxon>
        <taxon>Pseudomonadati</taxon>
        <taxon>Gemmatimonadota</taxon>
        <taxon>Gemmatimonadia</taxon>
        <taxon>Gemmatimonadales</taxon>
        <taxon>Gemmatimonadaceae</taxon>
        <taxon>Gemmatimonas</taxon>
    </lineage>
</organism>
<accession>C1A8U3</accession>
<proteinExistence type="inferred from homology"/>
<feature type="chain" id="PRO_1000204061" description="Diaminopimelate epimerase">
    <location>
        <begin position="1"/>
        <end position="277"/>
    </location>
</feature>
<feature type="active site" description="Proton donor" evidence="1">
    <location>
        <position position="74"/>
    </location>
</feature>
<feature type="active site" description="Proton acceptor" evidence="1">
    <location>
        <position position="208"/>
    </location>
</feature>
<feature type="binding site" evidence="1">
    <location>
        <position position="11"/>
    </location>
    <ligand>
        <name>substrate</name>
    </ligand>
</feature>
<feature type="binding site" evidence="1">
    <location>
        <position position="65"/>
    </location>
    <ligand>
        <name>substrate</name>
    </ligand>
</feature>
<feature type="binding site" evidence="1">
    <location>
        <begin position="75"/>
        <end position="76"/>
    </location>
    <ligand>
        <name>substrate</name>
    </ligand>
</feature>
<feature type="binding site" evidence="1">
    <location>
        <position position="180"/>
    </location>
    <ligand>
        <name>substrate</name>
    </ligand>
</feature>
<feature type="binding site" evidence="1">
    <location>
        <begin position="198"/>
        <end position="199"/>
    </location>
    <ligand>
        <name>substrate</name>
    </ligand>
</feature>
<feature type="binding site" evidence="1">
    <location>
        <begin position="209"/>
        <end position="210"/>
    </location>
    <ligand>
        <name>substrate</name>
    </ligand>
</feature>
<feature type="site" description="Could be important to modulate the pK values of the two catalytic cysteine residues" evidence="1">
    <location>
        <position position="148"/>
    </location>
</feature>
<feature type="site" description="Could be important to modulate the pK values of the two catalytic cysteine residues" evidence="1">
    <location>
        <position position="198"/>
    </location>
</feature>
<keyword id="KW-0028">Amino-acid biosynthesis</keyword>
<keyword id="KW-0963">Cytoplasm</keyword>
<keyword id="KW-0413">Isomerase</keyword>
<keyword id="KW-0457">Lysine biosynthesis</keyword>
<keyword id="KW-1185">Reference proteome</keyword>
<gene>
    <name evidence="1" type="primary">dapF</name>
    <name type="ordered locus">GAU_1611</name>
</gene>
<dbReference type="EC" id="5.1.1.7" evidence="1"/>
<dbReference type="EMBL" id="AP009153">
    <property type="protein sequence ID" value="BAH38653.1"/>
    <property type="molecule type" value="Genomic_DNA"/>
</dbReference>
<dbReference type="SMR" id="C1A8U3"/>
<dbReference type="STRING" id="379066.GAU_1611"/>
<dbReference type="KEGG" id="gau:GAU_1611"/>
<dbReference type="eggNOG" id="COG0253">
    <property type="taxonomic scope" value="Bacteria"/>
</dbReference>
<dbReference type="HOGENOM" id="CLU_053306_3_2_0"/>
<dbReference type="UniPathway" id="UPA00034">
    <property type="reaction ID" value="UER00025"/>
</dbReference>
<dbReference type="Proteomes" id="UP000002209">
    <property type="component" value="Chromosome"/>
</dbReference>
<dbReference type="GO" id="GO:0005829">
    <property type="term" value="C:cytosol"/>
    <property type="evidence" value="ECO:0007669"/>
    <property type="project" value="TreeGrafter"/>
</dbReference>
<dbReference type="GO" id="GO:0008837">
    <property type="term" value="F:diaminopimelate epimerase activity"/>
    <property type="evidence" value="ECO:0007669"/>
    <property type="project" value="UniProtKB-UniRule"/>
</dbReference>
<dbReference type="GO" id="GO:0009089">
    <property type="term" value="P:lysine biosynthetic process via diaminopimelate"/>
    <property type="evidence" value="ECO:0007669"/>
    <property type="project" value="UniProtKB-UniRule"/>
</dbReference>
<dbReference type="Gene3D" id="3.10.310.10">
    <property type="entry name" value="Diaminopimelate Epimerase, Chain A, domain 1"/>
    <property type="match status" value="2"/>
</dbReference>
<dbReference type="HAMAP" id="MF_00197">
    <property type="entry name" value="DAP_epimerase"/>
    <property type="match status" value="1"/>
</dbReference>
<dbReference type="InterPro" id="IPR001653">
    <property type="entry name" value="DAP_epimerase_DapF"/>
</dbReference>
<dbReference type="NCBIfam" id="TIGR00652">
    <property type="entry name" value="DapF"/>
    <property type="match status" value="1"/>
</dbReference>
<dbReference type="PANTHER" id="PTHR31689:SF0">
    <property type="entry name" value="DIAMINOPIMELATE EPIMERASE"/>
    <property type="match status" value="1"/>
</dbReference>
<dbReference type="PANTHER" id="PTHR31689">
    <property type="entry name" value="DIAMINOPIMELATE EPIMERASE, CHLOROPLASTIC"/>
    <property type="match status" value="1"/>
</dbReference>
<dbReference type="Pfam" id="PF01678">
    <property type="entry name" value="DAP_epimerase"/>
    <property type="match status" value="2"/>
</dbReference>
<dbReference type="SUPFAM" id="SSF54506">
    <property type="entry name" value="Diaminopimelate epimerase-like"/>
    <property type="match status" value="2"/>
</dbReference>
<protein>
    <recommendedName>
        <fullName evidence="1">Diaminopimelate epimerase</fullName>
        <shortName evidence="1">DAP epimerase</shortName>
        <ecNumber evidence="1">5.1.1.7</ecNumber>
    </recommendedName>
    <alternativeName>
        <fullName evidence="1">PLP-independent amino acid racemase</fullName>
    </alternativeName>
</protein>
<sequence>MSFVKMTGSGNDFVFFDGRTTPIDLVTQPEAIKAICNRYNGIGADGLVVLEPLQEEADVRVHYYNSDGTAADLCGNATLCSTAISAQWGITSASGMRLATGAGLINSRIDGLPAIALQPITDIRPDMPIAPATAQGRRVGFAVAGIPHLVILCEDADAVDVAGAGPALRRHEATGPAGANVNWVSPRPDGSWRYRTFERGVEGETLACGTGAVATAVLLRSWGLSDGATTTIRTSSGRDVEVDLEPLTAPDGRSLEGFRPTLRGEGRVVFRGEIAGL</sequence>
<evidence type="ECO:0000255" key="1">
    <source>
        <dbReference type="HAMAP-Rule" id="MF_00197"/>
    </source>
</evidence>
<comment type="function">
    <text evidence="1">Catalyzes the stereoinversion of LL-2,6-diaminopimelate (L,L-DAP) to meso-diaminopimelate (meso-DAP), a precursor of L-lysine and an essential component of the bacterial peptidoglycan.</text>
</comment>
<comment type="catalytic activity">
    <reaction evidence="1">
        <text>(2S,6S)-2,6-diaminopimelate = meso-2,6-diaminopimelate</text>
        <dbReference type="Rhea" id="RHEA:15393"/>
        <dbReference type="ChEBI" id="CHEBI:57609"/>
        <dbReference type="ChEBI" id="CHEBI:57791"/>
        <dbReference type="EC" id="5.1.1.7"/>
    </reaction>
</comment>
<comment type="pathway">
    <text evidence="1">Amino-acid biosynthesis; L-lysine biosynthesis via DAP pathway; DL-2,6-diaminopimelate from LL-2,6-diaminopimelate: step 1/1.</text>
</comment>
<comment type="subunit">
    <text evidence="1">Homodimer.</text>
</comment>
<comment type="subcellular location">
    <subcellularLocation>
        <location evidence="1">Cytoplasm</location>
    </subcellularLocation>
</comment>
<comment type="similarity">
    <text evidence="1">Belongs to the diaminopimelate epimerase family.</text>
</comment>